<organism>
    <name type="scientific">Bacillus anthracis (strain A0248)</name>
    <dbReference type="NCBI Taxonomy" id="592021"/>
    <lineage>
        <taxon>Bacteria</taxon>
        <taxon>Bacillati</taxon>
        <taxon>Bacillota</taxon>
        <taxon>Bacilli</taxon>
        <taxon>Bacillales</taxon>
        <taxon>Bacillaceae</taxon>
        <taxon>Bacillus</taxon>
        <taxon>Bacillus cereus group</taxon>
    </lineage>
</organism>
<proteinExistence type="inferred from homology"/>
<sequence length="309" mass="34587">MPKVRTKDLIEQFQLELISGEEGIHRPIDTSDLSRPGIEMAGFFTYYPADRVQLLGKTELTFFDTLTSDQKQERMKALCTEETPCIIVTRNQDVPDELLQASRESGMPLLRSSQTTTRLSSRLTNYLEGKLAPTTAVHGVLVDIYGVGVLITGQSGVGKSETALELVKRGHRLVADDSVEIRQEDEDMLVGSSPDLIEHLLEIRGLGIINVMTLFGAGAVRNYKRITLVINLEIWDQKKNYDRLGLDEEKMKIIDTELTKITLPVRPGRNLAVIIEVAAMNFRLKRMGVNAAQQFSERLMSAIELGNQE</sequence>
<name>HPRK_BACAA</name>
<gene>
    <name evidence="1" type="primary">hprK</name>
    <name type="ordered locus">BAA_5422</name>
</gene>
<keyword id="KW-0067">ATP-binding</keyword>
<keyword id="KW-0119">Carbohydrate metabolism</keyword>
<keyword id="KW-0418">Kinase</keyword>
<keyword id="KW-0460">Magnesium</keyword>
<keyword id="KW-0479">Metal-binding</keyword>
<keyword id="KW-0511">Multifunctional enzyme</keyword>
<keyword id="KW-0547">Nucleotide-binding</keyword>
<keyword id="KW-0723">Serine/threonine-protein kinase</keyword>
<keyword id="KW-0808">Transferase</keyword>
<feature type="chain" id="PRO_1000165066" description="HPr kinase/phosphorylase">
    <location>
        <begin position="1"/>
        <end position="309"/>
    </location>
</feature>
<feature type="region of interest" description="Important for the catalytic mechanism of both phosphorylation and dephosphorylation" evidence="1">
    <location>
        <begin position="201"/>
        <end position="210"/>
    </location>
</feature>
<feature type="region of interest" description="Important for the catalytic mechanism of dephosphorylation" evidence="1">
    <location>
        <begin position="264"/>
        <end position="269"/>
    </location>
</feature>
<feature type="active site" evidence="1">
    <location>
        <position position="138"/>
    </location>
</feature>
<feature type="active site" evidence="1">
    <location>
        <position position="159"/>
    </location>
</feature>
<feature type="active site" description="Proton acceptor; for phosphorylation activity. Proton donor; for dephosphorylation activity" evidence="1">
    <location>
        <position position="177"/>
    </location>
</feature>
<feature type="active site" evidence="1">
    <location>
        <position position="243"/>
    </location>
</feature>
<feature type="binding site" evidence="1">
    <location>
        <begin position="153"/>
        <end position="160"/>
    </location>
    <ligand>
        <name>ATP</name>
        <dbReference type="ChEBI" id="CHEBI:30616"/>
    </ligand>
</feature>
<feature type="binding site" evidence="1">
    <location>
        <position position="160"/>
    </location>
    <ligand>
        <name>Mg(2+)</name>
        <dbReference type="ChEBI" id="CHEBI:18420"/>
    </ligand>
</feature>
<feature type="binding site" evidence="1">
    <location>
        <position position="202"/>
    </location>
    <ligand>
        <name>Mg(2+)</name>
        <dbReference type="ChEBI" id="CHEBI:18420"/>
    </ligand>
</feature>
<comment type="function">
    <text evidence="1">Catalyzes the ATP- as well as the pyrophosphate-dependent phosphorylation of a specific serine residue in HPr, a phosphocarrier protein of the phosphoenolpyruvate-dependent sugar phosphotransferase system (PTS). HprK/P also catalyzes the pyrophosphate-producing, inorganic phosphate-dependent dephosphorylation (phosphorolysis) of seryl-phosphorylated HPr (P-Ser-HPr). The two antagonistic activities of HprK/P are regulated by several intracellular metabolites, which change their concentration in response to the absence or presence of rapidly metabolisable carbon sources (glucose, fructose, etc.) in the growth medium. Also phosphorylates/dephosphorylates the HPr-like catabolite repression protein crh on a specific serine residue. Therefore, by controlling the phosphorylation state of HPr and crh, HPrK/P is a sensor enzyme that plays a major role in the regulation of carbon metabolism and sugar transport: it mediates carbon catabolite repression (CCR), and regulates PTS-catalyzed carbohydrate uptake and inducer exclusion.</text>
</comment>
<comment type="catalytic activity">
    <reaction evidence="1">
        <text>[HPr protein]-L-serine + ATP = [HPr protein]-O-phospho-L-serine + ADP + H(+)</text>
        <dbReference type="Rhea" id="RHEA:46600"/>
        <dbReference type="Rhea" id="RHEA-COMP:11602"/>
        <dbReference type="Rhea" id="RHEA-COMP:11603"/>
        <dbReference type="ChEBI" id="CHEBI:15378"/>
        <dbReference type="ChEBI" id="CHEBI:29999"/>
        <dbReference type="ChEBI" id="CHEBI:30616"/>
        <dbReference type="ChEBI" id="CHEBI:83421"/>
        <dbReference type="ChEBI" id="CHEBI:456216"/>
    </reaction>
</comment>
<comment type="catalytic activity">
    <reaction evidence="1">
        <text>[HPr protein]-O-phospho-L-serine + phosphate + H(+) = [HPr protein]-L-serine + diphosphate</text>
        <dbReference type="Rhea" id="RHEA:46604"/>
        <dbReference type="Rhea" id="RHEA-COMP:11602"/>
        <dbReference type="Rhea" id="RHEA-COMP:11603"/>
        <dbReference type="ChEBI" id="CHEBI:15378"/>
        <dbReference type="ChEBI" id="CHEBI:29999"/>
        <dbReference type="ChEBI" id="CHEBI:33019"/>
        <dbReference type="ChEBI" id="CHEBI:43474"/>
        <dbReference type="ChEBI" id="CHEBI:83421"/>
    </reaction>
</comment>
<comment type="cofactor">
    <cofactor evidence="1">
        <name>Mg(2+)</name>
        <dbReference type="ChEBI" id="CHEBI:18420"/>
    </cofactor>
</comment>
<comment type="subunit">
    <text evidence="1">Homohexamer.</text>
</comment>
<comment type="domain">
    <text evidence="1">The Walker A ATP-binding motif also binds Pi and PPi.</text>
</comment>
<comment type="miscellaneous">
    <text evidence="1">Both phosphorylation and phosphorolysis are carried out by the same active site and suggest a common mechanism for both reactions.</text>
</comment>
<comment type="similarity">
    <text evidence="1">Belongs to the HPrK/P family.</text>
</comment>
<reference key="1">
    <citation type="submission" date="2009-04" db="EMBL/GenBank/DDBJ databases">
        <title>Genome sequence of Bacillus anthracis A0248.</title>
        <authorList>
            <person name="Dodson R.J."/>
            <person name="Munk A.C."/>
            <person name="Bruce D."/>
            <person name="Detter C."/>
            <person name="Tapia R."/>
            <person name="Sutton G."/>
            <person name="Sims D."/>
            <person name="Brettin T."/>
        </authorList>
    </citation>
    <scope>NUCLEOTIDE SEQUENCE [LARGE SCALE GENOMIC DNA]</scope>
    <source>
        <strain>A0248</strain>
    </source>
</reference>
<accession>C3P0D0</accession>
<evidence type="ECO:0000255" key="1">
    <source>
        <dbReference type="HAMAP-Rule" id="MF_01249"/>
    </source>
</evidence>
<protein>
    <recommendedName>
        <fullName evidence="1">HPr kinase/phosphorylase</fullName>
        <shortName evidence="1">HPrK/P</shortName>
        <ecNumber evidence="1">2.7.11.-</ecNumber>
        <ecNumber evidence="1">2.7.4.-</ecNumber>
    </recommendedName>
    <alternativeName>
        <fullName evidence="1">HPr(Ser) kinase/phosphorylase</fullName>
    </alternativeName>
</protein>
<dbReference type="EC" id="2.7.11.-" evidence="1"/>
<dbReference type="EC" id="2.7.4.-" evidence="1"/>
<dbReference type="EMBL" id="CP001598">
    <property type="protein sequence ID" value="ACQ48108.1"/>
    <property type="molecule type" value="Genomic_DNA"/>
</dbReference>
<dbReference type="RefSeq" id="WP_001127244.1">
    <property type="nucleotide sequence ID" value="NC_012659.1"/>
</dbReference>
<dbReference type="SMR" id="C3P0D0"/>
<dbReference type="GeneID" id="45024995"/>
<dbReference type="KEGG" id="bai:BAA_5422"/>
<dbReference type="HOGENOM" id="CLU_052030_0_1_9"/>
<dbReference type="GO" id="GO:0005524">
    <property type="term" value="F:ATP binding"/>
    <property type="evidence" value="ECO:0007669"/>
    <property type="project" value="UniProtKB-UniRule"/>
</dbReference>
<dbReference type="GO" id="GO:0000287">
    <property type="term" value="F:magnesium ion binding"/>
    <property type="evidence" value="ECO:0007669"/>
    <property type="project" value="UniProtKB-UniRule"/>
</dbReference>
<dbReference type="GO" id="GO:0000155">
    <property type="term" value="F:phosphorelay sensor kinase activity"/>
    <property type="evidence" value="ECO:0007669"/>
    <property type="project" value="InterPro"/>
</dbReference>
<dbReference type="GO" id="GO:0004674">
    <property type="term" value="F:protein serine/threonine kinase activity"/>
    <property type="evidence" value="ECO:0007669"/>
    <property type="project" value="UniProtKB-KW"/>
</dbReference>
<dbReference type="GO" id="GO:0004712">
    <property type="term" value="F:protein serine/threonine/tyrosine kinase activity"/>
    <property type="evidence" value="ECO:0007669"/>
    <property type="project" value="UniProtKB-UniRule"/>
</dbReference>
<dbReference type="GO" id="GO:0006109">
    <property type="term" value="P:regulation of carbohydrate metabolic process"/>
    <property type="evidence" value="ECO:0007669"/>
    <property type="project" value="UniProtKB-UniRule"/>
</dbReference>
<dbReference type="CDD" id="cd01918">
    <property type="entry name" value="HprK_C"/>
    <property type="match status" value="1"/>
</dbReference>
<dbReference type="FunFam" id="3.40.1390.20:FF:000002">
    <property type="entry name" value="HPr kinase/phosphorylase"/>
    <property type="match status" value="1"/>
</dbReference>
<dbReference type="FunFam" id="3.40.50.300:FF:000174">
    <property type="entry name" value="HPr kinase/phosphorylase"/>
    <property type="match status" value="1"/>
</dbReference>
<dbReference type="Gene3D" id="3.40.1390.20">
    <property type="entry name" value="HprK N-terminal domain-like"/>
    <property type="match status" value="1"/>
</dbReference>
<dbReference type="Gene3D" id="3.40.50.300">
    <property type="entry name" value="P-loop containing nucleotide triphosphate hydrolases"/>
    <property type="match status" value="1"/>
</dbReference>
<dbReference type="HAMAP" id="MF_01249">
    <property type="entry name" value="HPr_kinase"/>
    <property type="match status" value="1"/>
</dbReference>
<dbReference type="InterPro" id="IPR003755">
    <property type="entry name" value="HPr(Ser)_kin/Pase"/>
</dbReference>
<dbReference type="InterPro" id="IPR011104">
    <property type="entry name" value="Hpr_kin/Pase_C"/>
</dbReference>
<dbReference type="InterPro" id="IPR011126">
    <property type="entry name" value="Hpr_kin/Pase_Hpr_N"/>
</dbReference>
<dbReference type="InterPro" id="IPR027417">
    <property type="entry name" value="P-loop_NTPase"/>
</dbReference>
<dbReference type="InterPro" id="IPR028979">
    <property type="entry name" value="Ser_kin/Pase_Hpr-like_N_sf"/>
</dbReference>
<dbReference type="NCBIfam" id="TIGR00679">
    <property type="entry name" value="hpr-ser"/>
    <property type="match status" value="1"/>
</dbReference>
<dbReference type="PANTHER" id="PTHR30305:SF1">
    <property type="entry name" value="HPR KINASE_PHOSPHORYLASE"/>
    <property type="match status" value="1"/>
</dbReference>
<dbReference type="PANTHER" id="PTHR30305">
    <property type="entry name" value="PROTEIN YJDM-RELATED"/>
    <property type="match status" value="1"/>
</dbReference>
<dbReference type="Pfam" id="PF07475">
    <property type="entry name" value="Hpr_kinase_C"/>
    <property type="match status" value="1"/>
</dbReference>
<dbReference type="Pfam" id="PF02603">
    <property type="entry name" value="Hpr_kinase_N"/>
    <property type="match status" value="1"/>
</dbReference>
<dbReference type="SUPFAM" id="SSF75138">
    <property type="entry name" value="HprK N-terminal domain-like"/>
    <property type="match status" value="1"/>
</dbReference>
<dbReference type="SUPFAM" id="SSF53795">
    <property type="entry name" value="PEP carboxykinase-like"/>
    <property type="match status" value="1"/>
</dbReference>